<comment type="function">
    <text evidence="1">Hydrolyzes the pyrophosphate bond of UDP-2,3-diacylglucosamine to yield 2,3-diacylglucosamine 1-phosphate (lipid X) and UMP by catalyzing the attack of water at the alpha-P atom. Involved in the biosynthesis of lipid A, a phosphorylated glycolipid that anchors the lipopolysaccharide to the outer membrane of the cell.</text>
</comment>
<comment type="catalytic activity">
    <reaction evidence="1">
        <text>UDP-2-N,3-O-bis[(3R)-3-hydroxytetradecanoyl]-alpha-D-glucosamine + H2O = 2-N,3-O-bis[(3R)-3-hydroxytetradecanoyl]-alpha-D-glucosaminyl 1-phosphate + UMP + 2 H(+)</text>
        <dbReference type="Rhea" id="RHEA:25213"/>
        <dbReference type="ChEBI" id="CHEBI:15377"/>
        <dbReference type="ChEBI" id="CHEBI:15378"/>
        <dbReference type="ChEBI" id="CHEBI:57865"/>
        <dbReference type="ChEBI" id="CHEBI:57957"/>
        <dbReference type="ChEBI" id="CHEBI:78847"/>
        <dbReference type="EC" id="3.6.1.54"/>
    </reaction>
</comment>
<comment type="cofactor">
    <cofactor evidence="1">
        <name>Mn(2+)</name>
        <dbReference type="ChEBI" id="CHEBI:29035"/>
    </cofactor>
    <text evidence="1">Binds 2 Mn(2+) ions per subunit in a binuclear metal center.</text>
</comment>
<comment type="pathway">
    <text evidence="1">Glycolipid biosynthesis; lipid IV(A) biosynthesis; lipid IV(A) from (3R)-3-hydroxytetradecanoyl-[acyl-carrier-protein] and UDP-N-acetyl-alpha-D-glucosamine: step 4/6.</text>
</comment>
<comment type="subcellular location">
    <subcellularLocation>
        <location evidence="1">Cell inner membrane</location>
        <topology evidence="1">Peripheral membrane protein</topology>
        <orientation evidence="1">Cytoplasmic side</orientation>
    </subcellularLocation>
</comment>
<comment type="similarity">
    <text evidence="1">Belongs to the LpxH family.</text>
</comment>
<accession>Q88IU7</accession>
<sequence length="240" mass="27325">MILLISDLHLQEERPDISRAFLDLLDGRARHAKALYILGDFFEAWIGDDAMTPFQQSICQAMRRLSDSGTAIYLMHGNRDFLIGQAFCKAAGCTLLNDPSVIELGGEQVLLMHGDTLCTRDLGYMKMRRLLRNPLSLWILRHLPLSARYKLARKLRSESRTQVRMKSTEIVDVTPEEVPKVMAAHGVRTLVHGHTHRPAIHKLMVDGQPARRIVLGDWDRRGWALQVDEQGFQLAPFEFS</sequence>
<evidence type="ECO:0000255" key="1">
    <source>
        <dbReference type="HAMAP-Rule" id="MF_00575"/>
    </source>
</evidence>
<name>LPXH_PSEPK</name>
<dbReference type="EC" id="3.6.1.54" evidence="1"/>
<dbReference type="EMBL" id="AE015451">
    <property type="protein sequence ID" value="AAN68510.1"/>
    <property type="molecule type" value="Genomic_DNA"/>
</dbReference>
<dbReference type="RefSeq" id="NP_745046.1">
    <property type="nucleotide sequence ID" value="NC_002947.4"/>
</dbReference>
<dbReference type="RefSeq" id="WP_010953804.1">
    <property type="nucleotide sequence ID" value="NZ_CP169744.1"/>
</dbReference>
<dbReference type="SMR" id="Q88IU7"/>
<dbReference type="STRING" id="160488.PP_2902"/>
<dbReference type="PaxDb" id="160488-PP_2902"/>
<dbReference type="KEGG" id="ppu:PP_2902"/>
<dbReference type="PATRIC" id="fig|160488.4.peg.3076"/>
<dbReference type="eggNOG" id="COG2908">
    <property type="taxonomic scope" value="Bacteria"/>
</dbReference>
<dbReference type="HOGENOM" id="CLU_074586_0_0_6"/>
<dbReference type="OrthoDB" id="9783283at2"/>
<dbReference type="PhylomeDB" id="Q88IU7"/>
<dbReference type="BioCyc" id="PPUT160488:G1G01-3081-MONOMER"/>
<dbReference type="UniPathway" id="UPA00359">
    <property type="reaction ID" value="UER00480"/>
</dbReference>
<dbReference type="Proteomes" id="UP000000556">
    <property type="component" value="Chromosome"/>
</dbReference>
<dbReference type="GO" id="GO:0005737">
    <property type="term" value="C:cytoplasm"/>
    <property type="evidence" value="ECO:0007669"/>
    <property type="project" value="InterPro"/>
</dbReference>
<dbReference type="GO" id="GO:0019897">
    <property type="term" value="C:extrinsic component of plasma membrane"/>
    <property type="evidence" value="ECO:0007669"/>
    <property type="project" value="UniProtKB-UniRule"/>
</dbReference>
<dbReference type="GO" id="GO:0030145">
    <property type="term" value="F:manganese ion binding"/>
    <property type="evidence" value="ECO:0007669"/>
    <property type="project" value="UniProtKB-UniRule"/>
</dbReference>
<dbReference type="GO" id="GO:0008758">
    <property type="term" value="F:UDP-2,3-diacylglucosamine hydrolase activity"/>
    <property type="evidence" value="ECO:0007669"/>
    <property type="project" value="UniProtKB-UniRule"/>
</dbReference>
<dbReference type="GO" id="GO:0009245">
    <property type="term" value="P:lipid A biosynthetic process"/>
    <property type="evidence" value="ECO:0007669"/>
    <property type="project" value="UniProtKB-UniRule"/>
</dbReference>
<dbReference type="CDD" id="cd07398">
    <property type="entry name" value="MPP_YbbF-LpxH"/>
    <property type="match status" value="1"/>
</dbReference>
<dbReference type="Gene3D" id="3.60.21.10">
    <property type="match status" value="1"/>
</dbReference>
<dbReference type="HAMAP" id="MF_00575">
    <property type="entry name" value="LpxH"/>
    <property type="match status" value="1"/>
</dbReference>
<dbReference type="InterPro" id="IPR004843">
    <property type="entry name" value="Calcineurin-like_PHP_ApaH"/>
</dbReference>
<dbReference type="InterPro" id="IPR043461">
    <property type="entry name" value="LpxH-like"/>
</dbReference>
<dbReference type="InterPro" id="IPR029052">
    <property type="entry name" value="Metallo-depent_PP-like"/>
</dbReference>
<dbReference type="InterPro" id="IPR010138">
    <property type="entry name" value="UDP-diacylglucosamine_Hdrlase"/>
</dbReference>
<dbReference type="NCBIfam" id="TIGR01854">
    <property type="entry name" value="lipid_A_lpxH"/>
    <property type="match status" value="1"/>
</dbReference>
<dbReference type="NCBIfam" id="NF003743">
    <property type="entry name" value="PRK05340.1"/>
    <property type="match status" value="1"/>
</dbReference>
<dbReference type="PANTHER" id="PTHR34990:SF1">
    <property type="entry name" value="UDP-2,3-DIACYLGLUCOSAMINE HYDROLASE"/>
    <property type="match status" value="1"/>
</dbReference>
<dbReference type="PANTHER" id="PTHR34990">
    <property type="entry name" value="UDP-2,3-DIACYLGLUCOSAMINE HYDROLASE-RELATED"/>
    <property type="match status" value="1"/>
</dbReference>
<dbReference type="Pfam" id="PF00149">
    <property type="entry name" value="Metallophos"/>
    <property type="match status" value="1"/>
</dbReference>
<dbReference type="SUPFAM" id="SSF56300">
    <property type="entry name" value="Metallo-dependent phosphatases"/>
    <property type="match status" value="1"/>
</dbReference>
<feature type="chain" id="PRO_0000214118" description="UDP-2,3-diacylglucosamine hydrolase">
    <location>
        <begin position="1"/>
        <end position="240"/>
    </location>
</feature>
<feature type="binding site" evidence="1">
    <location>
        <position position="7"/>
    </location>
    <ligand>
        <name>Mn(2+)</name>
        <dbReference type="ChEBI" id="CHEBI:29035"/>
        <label>1</label>
    </ligand>
</feature>
<feature type="binding site" evidence="1">
    <location>
        <position position="9"/>
    </location>
    <ligand>
        <name>Mn(2+)</name>
        <dbReference type="ChEBI" id="CHEBI:29035"/>
        <label>1</label>
    </ligand>
</feature>
<feature type="binding site" evidence="1">
    <location>
        <position position="40"/>
    </location>
    <ligand>
        <name>Mn(2+)</name>
        <dbReference type="ChEBI" id="CHEBI:29035"/>
        <label>1</label>
    </ligand>
</feature>
<feature type="binding site" evidence="1">
    <location>
        <position position="40"/>
    </location>
    <ligand>
        <name>Mn(2+)</name>
        <dbReference type="ChEBI" id="CHEBI:29035"/>
        <label>2</label>
    </ligand>
</feature>
<feature type="binding site" evidence="1">
    <location>
        <begin position="78"/>
        <end position="79"/>
    </location>
    <ligand>
        <name>substrate</name>
    </ligand>
</feature>
<feature type="binding site" evidence="1">
    <location>
        <position position="78"/>
    </location>
    <ligand>
        <name>Mn(2+)</name>
        <dbReference type="ChEBI" id="CHEBI:29035"/>
        <label>2</label>
    </ligand>
</feature>
<feature type="binding site" evidence="1">
    <location>
        <position position="113"/>
    </location>
    <ligand>
        <name>Mn(2+)</name>
        <dbReference type="ChEBI" id="CHEBI:29035"/>
        <label>2</label>
    </ligand>
</feature>
<feature type="binding site" evidence="1">
    <location>
        <position position="121"/>
    </location>
    <ligand>
        <name>substrate</name>
    </ligand>
</feature>
<feature type="binding site" evidence="1">
    <location>
        <position position="159"/>
    </location>
    <ligand>
        <name>substrate</name>
    </ligand>
</feature>
<feature type="binding site" evidence="1">
    <location>
        <position position="166"/>
    </location>
    <ligand>
        <name>substrate</name>
    </ligand>
</feature>
<feature type="binding site" evidence="1">
    <location>
        <position position="194"/>
    </location>
    <ligand>
        <name>Mn(2+)</name>
        <dbReference type="ChEBI" id="CHEBI:29035"/>
        <label>2</label>
    </ligand>
</feature>
<feature type="binding site" evidence="1">
    <location>
        <position position="194"/>
    </location>
    <ligand>
        <name>substrate</name>
    </ligand>
</feature>
<feature type="binding site" evidence="1">
    <location>
        <position position="196"/>
    </location>
    <ligand>
        <name>Mn(2+)</name>
        <dbReference type="ChEBI" id="CHEBI:29035"/>
        <label>1</label>
    </ligand>
</feature>
<proteinExistence type="inferred from homology"/>
<organism>
    <name type="scientific">Pseudomonas putida (strain ATCC 47054 / DSM 6125 / CFBP 8728 / NCIMB 11950 / KT2440)</name>
    <dbReference type="NCBI Taxonomy" id="160488"/>
    <lineage>
        <taxon>Bacteria</taxon>
        <taxon>Pseudomonadati</taxon>
        <taxon>Pseudomonadota</taxon>
        <taxon>Gammaproteobacteria</taxon>
        <taxon>Pseudomonadales</taxon>
        <taxon>Pseudomonadaceae</taxon>
        <taxon>Pseudomonas</taxon>
    </lineage>
</organism>
<reference key="1">
    <citation type="journal article" date="2002" name="Environ. Microbiol.">
        <title>Complete genome sequence and comparative analysis of the metabolically versatile Pseudomonas putida KT2440.</title>
        <authorList>
            <person name="Nelson K.E."/>
            <person name="Weinel C."/>
            <person name="Paulsen I.T."/>
            <person name="Dodson R.J."/>
            <person name="Hilbert H."/>
            <person name="Martins dos Santos V.A.P."/>
            <person name="Fouts D.E."/>
            <person name="Gill S.R."/>
            <person name="Pop M."/>
            <person name="Holmes M."/>
            <person name="Brinkac L.M."/>
            <person name="Beanan M.J."/>
            <person name="DeBoy R.T."/>
            <person name="Daugherty S.C."/>
            <person name="Kolonay J.F."/>
            <person name="Madupu R."/>
            <person name="Nelson W.C."/>
            <person name="White O."/>
            <person name="Peterson J.D."/>
            <person name="Khouri H.M."/>
            <person name="Hance I."/>
            <person name="Chris Lee P."/>
            <person name="Holtzapple E.K."/>
            <person name="Scanlan D."/>
            <person name="Tran K."/>
            <person name="Moazzez A."/>
            <person name="Utterback T.R."/>
            <person name="Rizzo M."/>
            <person name="Lee K."/>
            <person name="Kosack D."/>
            <person name="Moestl D."/>
            <person name="Wedler H."/>
            <person name="Lauber J."/>
            <person name="Stjepandic D."/>
            <person name="Hoheisel J."/>
            <person name="Straetz M."/>
            <person name="Heim S."/>
            <person name="Kiewitz C."/>
            <person name="Eisen J.A."/>
            <person name="Timmis K.N."/>
            <person name="Duesterhoeft A."/>
            <person name="Tuemmler B."/>
            <person name="Fraser C.M."/>
        </authorList>
    </citation>
    <scope>NUCLEOTIDE SEQUENCE [LARGE SCALE GENOMIC DNA]</scope>
    <source>
        <strain>ATCC 47054 / DSM 6125 / CFBP 8728 / NCIMB 11950 / KT2440</strain>
    </source>
</reference>
<keyword id="KW-0997">Cell inner membrane</keyword>
<keyword id="KW-1003">Cell membrane</keyword>
<keyword id="KW-0378">Hydrolase</keyword>
<keyword id="KW-0441">Lipid A biosynthesis</keyword>
<keyword id="KW-0444">Lipid biosynthesis</keyword>
<keyword id="KW-0443">Lipid metabolism</keyword>
<keyword id="KW-0464">Manganese</keyword>
<keyword id="KW-0472">Membrane</keyword>
<keyword id="KW-0479">Metal-binding</keyword>
<keyword id="KW-1185">Reference proteome</keyword>
<gene>
    <name evidence="1" type="primary">lpxH</name>
    <name type="ordered locus">PP_2902</name>
</gene>
<protein>
    <recommendedName>
        <fullName evidence="1">UDP-2,3-diacylglucosamine hydrolase</fullName>
        <ecNumber evidence="1">3.6.1.54</ecNumber>
    </recommendedName>
    <alternativeName>
        <fullName evidence="1">UDP-2,3-diacylglucosamine diphosphatase</fullName>
    </alternativeName>
</protein>